<proteinExistence type="evidence at protein level"/>
<evidence type="ECO:0000250" key="1"/>
<evidence type="ECO:0000255" key="2"/>
<evidence type="ECO:0000255" key="3">
    <source>
        <dbReference type="PROSITE-ProRule" id="PRU00090"/>
    </source>
</evidence>
<evidence type="ECO:0000256" key="4">
    <source>
        <dbReference type="SAM" id="MobiDB-lite"/>
    </source>
</evidence>
<evidence type="ECO:0000269" key="5">
    <source>
    </source>
</evidence>
<evidence type="ECO:0000269" key="6">
    <source>
    </source>
</evidence>
<evidence type="ECO:0000269" key="7">
    <source>
    </source>
</evidence>
<evidence type="ECO:0000269" key="8">
    <source>
    </source>
</evidence>
<evidence type="ECO:0000269" key="9">
    <source>
    </source>
</evidence>
<evidence type="ECO:0000269" key="10">
    <source>
    </source>
</evidence>
<evidence type="ECO:0000269" key="11">
    <source>
    </source>
</evidence>
<evidence type="ECO:0000269" key="12">
    <source>
    </source>
</evidence>
<evidence type="ECO:0000305" key="13"/>
<evidence type="ECO:0007744" key="14">
    <source>
        <dbReference type="PDB" id="6C0B"/>
    </source>
</evidence>
<evidence type="ECO:0007829" key="15">
    <source>
        <dbReference type="PDB" id="7X8P"/>
    </source>
</evidence>
<gene>
    <name type="primary">FZD2</name>
</gene>
<dbReference type="EMBL" id="L37882">
    <property type="protein sequence ID" value="AAB46397.1"/>
    <property type="molecule type" value="mRNA"/>
</dbReference>
<dbReference type="EMBL" id="AB017364">
    <property type="protein sequence ID" value="BAA34667.1"/>
    <property type="molecule type" value="mRNA"/>
</dbReference>
<dbReference type="EMBL" id="BC113402">
    <property type="protein sequence ID" value="AAI13403.1"/>
    <property type="molecule type" value="mRNA"/>
</dbReference>
<dbReference type="EMBL" id="BC113404">
    <property type="protein sequence ID" value="AAI13405.1"/>
    <property type="molecule type" value="mRNA"/>
</dbReference>
<dbReference type="CCDS" id="CCDS11484.1"/>
<dbReference type="PIR" id="JE0338">
    <property type="entry name" value="JE0338"/>
</dbReference>
<dbReference type="RefSeq" id="NP_001457.1">
    <property type="nucleotide sequence ID" value="NM_001466.4"/>
</dbReference>
<dbReference type="PDB" id="6C0B">
    <property type="method" value="X-ray"/>
    <property type="resolution" value="2.50 A"/>
    <property type="chains" value="B=34-156"/>
</dbReference>
<dbReference type="PDB" id="7N95">
    <property type="method" value="EM"/>
    <property type="resolution" value="4.10 A"/>
    <property type="chains" value="B=35-155"/>
</dbReference>
<dbReference type="PDB" id="7N97">
    <property type="method" value="EM"/>
    <property type="resolution" value="5.10 A"/>
    <property type="chains" value="B=35-155"/>
</dbReference>
<dbReference type="PDB" id="7N9S">
    <property type="method" value="EM"/>
    <property type="resolution" value="5.10 A"/>
    <property type="chains" value="B=35-155"/>
</dbReference>
<dbReference type="PDB" id="7X8P">
    <property type="method" value="X-ray"/>
    <property type="resolution" value="2.24 A"/>
    <property type="chains" value="A/D=34-159"/>
</dbReference>
<dbReference type="PDBsum" id="6C0B"/>
<dbReference type="PDBsum" id="7N95"/>
<dbReference type="PDBsum" id="7N97"/>
<dbReference type="PDBsum" id="7N9S"/>
<dbReference type="PDBsum" id="7X8P"/>
<dbReference type="EMDB" id="EMD-24250"/>
<dbReference type="EMDB" id="EMD-24251"/>
<dbReference type="EMDB" id="EMD-24261"/>
<dbReference type="SMR" id="Q14332"/>
<dbReference type="BioGRID" id="108811">
    <property type="interactions" value="71"/>
</dbReference>
<dbReference type="FunCoup" id="Q14332">
    <property type="interactions" value="945"/>
</dbReference>
<dbReference type="IntAct" id="Q14332">
    <property type="interactions" value="60"/>
</dbReference>
<dbReference type="MINT" id="Q14332"/>
<dbReference type="STRING" id="9606.ENSP00000323901"/>
<dbReference type="ChEMBL" id="CHEMBL3559686"/>
<dbReference type="GuidetoPHARMACOLOGY" id="230"/>
<dbReference type="GlyCosmos" id="Q14332">
    <property type="glycosylation" value="4 sites, 2 glycans"/>
</dbReference>
<dbReference type="GlyGen" id="Q14332">
    <property type="glycosylation" value="8 sites, 1 N-linked glycan (1 site), 4 O-linked glycans (6 sites)"/>
</dbReference>
<dbReference type="iPTMnet" id="Q14332"/>
<dbReference type="PhosphoSitePlus" id="Q14332"/>
<dbReference type="BioMuta" id="FZD2"/>
<dbReference type="DMDM" id="17433019"/>
<dbReference type="jPOST" id="Q14332"/>
<dbReference type="MassIVE" id="Q14332"/>
<dbReference type="PaxDb" id="9606-ENSP00000323901"/>
<dbReference type="PeptideAtlas" id="Q14332"/>
<dbReference type="ProteomicsDB" id="59968"/>
<dbReference type="ABCD" id="Q14332">
    <property type="antibodies" value="42 sequenced antibodies"/>
</dbReference>
<dbReference type="Antibodypedia" id="17503">
    <property type="antibodies" value="354 antibodies from 36 providers"/>
</dbReference>
<dbReference type="DNASU" id="2535"/>
<dbReference type="Ensembl" id="ENST00000315323.5">
    <property type="protein sequence ID" value="ENSP00000323901.3"/>
    <property type="gene ID" value="ENSG00000180340.7"/>
</dbReference>
<dbReference type="GeneID" id="2535"/>
<dbReference type="KEGG" id="hsa:2535"/>
<dbReference type="MANE-Select" id="ENST00000315323.5">
    <property type="protein sequence ID" value="ENSP00000323901.3"/>
    <property type="RefSeq nucleotide sequence ID" value="NM_001466.4"/>
    <property type="RefSeq protein sequence ID" value="NP_001457.1"/>
</dbReference>
<dbReference type="UCSC" id="uc002igx.3">
    <property type="organism name" value="human"/>
</dbReference>
<dbReference type="AGR" id="HGNC:4040"/>
<dbReference type="CTD" id="2535"/>
<dbReference type="DisGeNET" id="2535"/>
<dbReference type="GeneCards" id="FZD2"/>
<dbReference type="HGNC" id="HGNC:4040">
    <property type="gene designation" value="FZD2"/>
</dbReference>
<dbReference type="HPA" id="ENSG00000180340">
    <property type="expression patterns" value="Tissue enhanced (choroid)"/>
</dbReference>
<dbReference type="MalaCards" id="FZD2"/>
<dbReference type="MIM" id="164745">
    <property type="type" value="phenotype"/>
</dbReference>
<dbReference type="MIM" id="600667">
    <property type="type" value="gene"/>
</dbReference>
<dbReference type="neXtProt" id="NX_Q14332"/>
<dbReference type="OpenTargets" id="ENSG00000180340"/>
<dbReference type="Orphanet" id="93328">
    <property type="disease" value="Autosomal dominant omodysplasia"/>
</dbReference>
<dbReference type="Orphanet" id="3107">
    <property type="disease" value="Autosomal dominant Robinow syndrome"/>
</dbReference>
<dbReference type="PharmGKB" id="PA28457"/>
<dbReference type="VEuPathDB" id="HostDB:ENSG00000180340"/>
<dbReference type="eggNOG" id="KOG3577">
    <property type="taxonomic scope" value="Eukaryota"/>
</dbReference>
<dbReference type="GeneTree" id="ENSGT00940000161812"/>
<dbReference type="HOGENOM" id="CLU_007873_2_1_1"/>
<dbReference type="InParanoid" id="Q14332"/>
<dbReference type="OMA" id="CPMHPGP"/>
<dbReference type="OrthoDB" id="10053709at2759"/>
<dbReference type="PAN-GO" id="Q14332">
    <property type="GO annotations" value="6 GO annotations based on evolutionary models"/>
</dbReference>
<dbReference type="PhylomeDB" id="Q14332"/>
<dbReference type="TreeFam" id="TF317907"/>
<dbReference type="PathwayCommons" id="Q14332"/>
<dbReference type="Reactome" id="R-HSA-201681">
    <property type="pathway name" value="TCF dependent signaling in response to WNT"/>
</dbReference>
<dbReference type="Reactome" id="R-HSA-373080">
    <property type="pathway name" value="Class B/2 (Secretin family receptors)"/>
</dbReference>
<dbReference type="Reactome" id="R-HSA-4086398">
    <property type="pathway name" value="Ca2+ pathway"/>
</dbReference>
<dbReference type="Reactome" id="R-HSA-4608870">
    <property type="pathway name" value="Asymmetric localization of PCP proteins"/>
</dbReference>
<dbReference type="Reactome" id="R-HSA-4641262">
    <property type="pathway name" value="Disassembly of the destruction complex and recruitment of AXIN to the membrane"/>
</dbReference>
<dbReference type="Reactome" id="R-HSA-5140745">
    <property type="pathway name" value="WNT5A-dependent internalization of FZD2, FZD5 and ROR2"/>
</dbReference>
<dbReference type="SignaLink" id="Q14332"/>
<dbReference type="SIGNOR" id="Q14332"/>
<dbReference type="BioGRID-ORCS" id="2535">
    <property type="hits" value="5 hits in 1141 CRISPR screens"/>
</dbReference>
<dbReference type="ChiTaRS" id="FZD2">
    <property type="organism name" value="human"/>
</dbReference>
<dbReference type="GeneWiki" id="FZD2"/>
<dbReference type="GenomeRNAi" id="2535"/>
<dbReference type="Pharos" id="Q14332">
    <property type="development level" value="Tchem"/>
</dbReference>
<dbReference type="PRO" id="PR:Q14332"/>
<dbReference type="Proteomes" id="UP000005640">
    <property type="component" value="Chromosome 17"/>
</dbReference>
<dbReference type="RNAct" id="Q14332">
    <property type="molecule type" value="protein"/>
</dbReference>
<dbReference type="Bgee" id="ENSG00000180340">
    <property type="expression patterns" value="Expressed in ventricular zone and 143 other cell types or tissues"/>
</dbReference>
<dbReference type="GO" id="GO:0030669">
    <property type="term" value="C:clathrin-coated endocytic vesicle membrane"/>
    <property type="evidence" value="ECO:0000304"/>
    <property type="project" value="Reactome"/>
</dbReference>
<dbReference type="GO" id="GO:0005737">
    <property type="term" value="C:cytoplasm"/>
    <property type="evidence" value="ECO:0000314"/>
    <property type="project" value="BHF-UCL"/>
</dbReference>
<dbReference type="GO" id="GO:0005925">
    <property type="term" value="C:focal adhesion"/>
    <property type="evidence" value="ECO:0007005"/>
    <property type="project" value="UniProtKB"/>
</dbReference>
<dbReference type="GO" id="GO:0005886">
    <property type="term" value="C:plasma membrane"/>
    <property type="evidence" value="ECO:0000314"/>
    <property type="project" value="BHF-UCL"/>
</dbReference>
<dbReference type="GO" id="GO:0004930">
    <property type="term" value="F:G protein-coupled receptor activity"/>
    <property type="evidence" value="ECO:0007669"/>
    <property type="project" value="UniProtKB-KW"/>
</dbReference>
<dbReference type="GO" id="GO:0030165">
    <property type="term" value="F:PDZ domain binding"/>
    <property type="evidence" value="ECO:0000353"/>
    <property type="project" value="UniProtKB"/>
</dbReference>
<dbReference type="GO" id="GO:0042813">
    <property type="term" value="F:Wnt receptor activity"/>
    <property type="evidence" value="ECO:0000314"/>
    <property type="project" value="WormBase"/>
</dbReference>
<dbReference type="GO" id="GO:0017147">
    <property type="term" value="F:Wnt-protein binding"/>
    <property type="evidence" value="ECO:0000318"/>
    <property type="project" value="GO_Central"/>
</dbReference>
<dbReference type="GO" id="GO:0060070">
    <property type="term" value="P:canonical Wnt signaling pathway"/>
    <property type="evidence" value="ECO:0000314"/>
    <property type="project" value="UniProtKB"/>
</dbReference>
<dbReference type="GO" id="GO:0007267">
    <property type="term" value="P:cell-cell signaling"/>
    <property type="evidence" value="ECO:0007669"/>
    <property type="project" value="Ensembl"/>
</dbReference>
<dbReference type="GO" id="GO:0090103">
    <property type="term" value="P:cochlea morphogenesis"/>
    <property type="evidence" value="ECO:0007669"/>
    <property type="project" value="Ensembl"/>
</dbReference>
<dbReference type="GO" id="GO:0045446">
    <property type="term" value="P:endothelial cell differentiation"/>
    <property type="evidence" value="ECO:0007669"/>
    <property type="project" value="Ensembl"/>
</dbReference>
<dbReference type="GO" id="GO:0060022">
    <property type="term" value="P:hard palate development"/>
    <property type="evidence" value="ECO:0007669"/>
    <property type="project" value="Ensembl"/>
</dbReference>
<dbReference type="GO" id="GO:0060119">
    <property type="term" value="P:inner ear receptor cell development"/>
    <property type="evidence" value="ECO:0007669"/>
    <property type="project" value="Ensembl"/>
</dbReference>
<dbReference type="GO" id="GO:0003149">
    <property type="term" value="P:membranous septum morphogenesis"/>
    <property type="evidence" value="ECO:0007669"/>
    <property type="project" value="Ensembl"/>
</dbReference>
<dbReference type="GO" id="GO:0003150">
    <property type="term" value="P:muscular septum morphogenesis"/>
    <property type="evidence" value="ECO:0007669"/>
    <property type="project" value="Ensembl"/>
</dbReference>
<dbReference type="GO" id="GO:0030182">
    <property type="term" value="P:neuron differentiation"/>
    <property type="evidence" value="ECO:0000250"/>
    <property type="project" value="UniProtKB"/>
</dbReference>
<dbReference type="GO" id="GO:0035567">
    <property type="term" value="P:non-canonical Wnt signaling pathway"/>
    <property type="evidence" value="ECO:0000318"/>
    <property type="project" value="GO_Central"/>
</dbReference>
<dbReference type="GO" id="GO:0003151">
    <property type="term" value="P:outflow tract morphogenesis"/>
    <property type="evidence" value="ECO:0007669"/>
    <property type="project" value="Ensembl"/>
</dbReference>
<dbReference type="GO" id="GO:0045893">
    <property type="term" value="P:positive regulation of DNA-templated transcription"/>
    <property type="evidence" value="ECO:0000314"/>
    <property type="project" value="BHF-UCL"/>
</dbReference>
<dbReference type="GO" id="GO:0007608">
    <property type="term" value="P:sensory perception of smell"/>
    <property type="evidence" value="ECO:0007669"/>
    <property type="project" value="Ensembl"/>
</dbReference>
<dbReference type="GO" id="GO:0016055">
    <property type="term" value="P:Wnt signaling pathway"/>
    <property type="evidence" value="ECO:0000315"/>
    <property type="project" value="UniProtKB"/>
</dbReference>
<dbReference type="GO" id="GO:0060071">
    <property type="term" value="P:Wnt signaling pathway, planar cell polarity pathway"/>
    <property type="evidence" value="ECO:0000303"/>
    <property type="project" value="ParkinsonsUK-UCL"/>
</dbReference>
<dbReference type="CDD" id="cd15245">
    <property type="entry name" value="7tmF_FZD2"/>
    <property type="match status" value="1"/>
</dbReference>
<dbReference type="CDD" id="cd07464">
    <property type="entry name" value="CRD_FZ2"/>
    <property type="match status" value="1"/>
</dbReference>
<dbReference type="FunFam" id="1.10.2000.10:FF:000003">
    <property type="entry name" value="Frizzled class receptor 2"/>
    <property type="match status" value="1"/>
</dbReference>
<dbReference type="FunFam" id="1.20.1070.10:FF:000029">
    <property type="entry name" value="Frizzled class receptor 2"/>
    <property type="match status" value="1"/>
</dbReference>
<dbReference type="Gene3D" id="1.10.2000.10">
    <property type="entry name" value="Frizzled cysteine-rich domain"/>
    <property type="match status" value="1"/>
</dbReference>
<dbReference type="Gene3D" id="1.20.1070.10">
    <property type="entry name" value="Rhodopsin 7-helix transmembrane proteins"/>
    <property type="match status" value="1"/>
</dbReference>
<dbReference type="InterPro" id="IPR015526">
    <property type="entry name" value="Frizzled/SFRP"/>
</dbReference>
<dbReference type="InterPro" id="IPR000539">
    <property type="entry name" value="Frizzled/Smoothened_7TM"/>
</dbReference>
<dbReference type="InterPro" id="IPR020067">
    <property type="entry name" value="Frizzled_dom"/>
</dbReference>
<dbReference type="InterPro" id="IPR036790">
    <property type="entry name" value="Frizzled_dom_sf"/>
</dbReference>
<dbReference type="InterPro" id="IPR041778">
    <property type="entry name" value="FZ2_CRD"/>
</dbReference>
<dbReference type="InterPro" id="IPR017981">
    <property type="entry name" value="GPCR_2-like_7TM"/>
</dbReference>
<dbReference type="PANTHER" id="PTHR11309">
    <property type="entry name" value="FRIZZLED"/>
    <property type="match status" value="1"/>
</dbReference>
<dbReference type="PANTHER" id="PTHR11309:SF34">
    <property type="entry name" value="FRIZZLED-2"/>
    <property type="match status" value="1"/>
</dbReference>
<dbReference type="Pfam" id="PF01534">
    <property type="entry name" value="Frizzled"/>
    <property type="match status" value="1"/>
</dbReference>
<dbReference type="Pfam" id="PF01392">
    <property type="entry name" value="Fz"/>
    <property type="match status" value="1"/>
</dbReference>
<dbReference type="PRINTS" id="PR00489">
    <property type="entry name" value="FRIZZLED"/>
</dbReference>
<dbReference type="SMART" id="SM00063">
    <property type="entry name" value="FRI"/>
    <property type="match status" value="1"/>
</dbReference>
<dbReference type="SMART" id="SM01330">
    <property type="entry name" value="Frizzled"/>
    <property type="match status" value="1"/>
</dbReference>
<dbReference type="SUPFAM" id="SSF63501">
    <property type="entry name" value="Frizzled cysteine-rich domain"/>
    <property type="match status" value="1"/>
</dbReference>
<dbReference type="PROSITE" id="PS50038">
    <property type="entry name" value="FZ"/>
    <property type="match status" value="1"/>
</dbReference>
<dbReference type="PROSITE" id="PS50261">
    <property type="entry name" value="G_PROTEIN_RECEP_F2_4"/>
    <property type="match status" value="1"/>
</dbReference>
<protein>
    <recommendedName>
        <fullName>Frizzled-2</fullName>
        <shortName>Fz-2</shortName>
        <shortName>hFz2</shortName>
    </recommendedName>
    <alternativeName>
        <fullName>FzE2</fullName>
    </alternativeName>
</protein>
<feature type="signal peptide" evidence="2">
    <location>
        <begin position="1"/>
        <end position="23"/>
    </location>
</feature>
<feature type="chain" id="PRO_0000012978" description="Frizzled-2">
    <location>
        <begin position="24"/>
        <end position="565"/>
    </location>
</feature>
<feature type="topological domain" description="Extracellular" evidence="2">
    <location>
        <begin position="24"/>
        <end position="247"/>
    </location>
</feature>
<feature type="transmembrane region" description="Helical; Name=1" evidence="2">
    <location>
        <begin position="248"/>
        <end position="268"/>
    </location>
</feature>
<feature type="topological domain" description="Cytoplasmic" evidence="2">
    <location>
        <begin position="269"/>
        <end position="279"/>
    </location>
</feature>
<feature type="transmembrane region" description="Helical; Name=2" evidence="2">
    <location>
        <begin position="280"/>
        <end position="300"/>
    </location>
</feature>
<feature type="topological domain" description="Extracellular" evidence="2">
    <location>
        <begin position="301"/>
        <end position="327"/>
    </location>
</feature>
<feature type="transmembrane region" description="Helical; Name=3" evidence="2">
    <location>
        <begin position="328"/>
        <end position="348"/>
    </location>
</feature>
<feature type="topological domain" description="Cytoplasmic" evidence="2">
    <location>
        <begin position="349"/>
        <end position="370"/>
    </location>
</feature>
<feature type="transmembrane region" description="Helical; Name=4" evidence="2">
    <location>
        <begin position="371"/>
        <end position="391"/>
    </location>
</feature>
<feature type="topological domain" description="Extracellular" evidence="2">
    <location>
        <begin position="392"/>
        <end position="414"/>
    </location>
</feature>
<feature type="transmembrane region" description="Helical; Name=5" evidence="2">
    <location>
        <begin position="415"/>
        <end position="435"/>
    </location>
</feature>
<feature type="topological domain" description="Cytoplasmic" evidence="2">
    <location>
        <begin position="436"/>
        <end position="461"/>
    </location>
</feature>
<feature type="transmembrane region" description="Helical; Name=6" evidence="2">
    <location>
        <begin position="462"/>
        <end position="482"/>
    </location>
</feature>
<feature type="topological domain" description="Extracellular" evidence="2">
    <location>
        <begin position="483"/>
        <end position="519"/>
    </location>
</feature>
<feature type="transmembrane region" description="Helical; Name=7" evidence="2">
    <location>
        <begin position="520"/>
        <end position="540"/>
    </location>
</feature>
<feature type="topological domain" description="Cytoplasmic" evidence="2">
    <location>
        <begin position="541"/>
        <end position="565"/>
    </location>
</feature>
<feature type="domain" description="FZ" evidence="3">
    <location>
        <begin position="34"/>
        <end position="153"/>
    </location>
</feature>
<feature type="region of interest" description="Disordered" evidence="4">
    <location>
        <begin position="160"/>
        <end position="189"/>
    </location>
</feature>
<feature type="short sequence motif" description="Lys-Thr-X-X-X-Trp motif, mediates interaction with the PDZ domain of Dvl family members" evidence="1">
    <location>
        <begin position="543"/>
        <end position="548"/>
    </location>
</feature>
<feature type="short sequence motif" description="PDZ-binding">
    <location>
        <begin position="563"/>
        <end position="565"/>
    </location>
</feature>
<feature type="compositionally biased region" description="Gly residues" evidence="4">
    <location>
        <begin position="174"/>
        <end position="188"/>
    </location>
</feature>
<feature type="glycosylation site" description="N-linked (GlcNAc...) asparagine" evidence="10 14">
    <location>
        <position position="53"/>
    </location>
</feature>
<feature type="glycosylation site" description="N-linked (GlcNAc...) asparagine" evidence="2">
    <location>
        <position position="154"/>
    </location>
</feature>
<feature type="disulfide bond" evidence="3 10 14">
    <location>
        <begin position="39"/>
        <end position="100"/>
    </location>
</feature>
<feature type="disulfide bond" evidence="3 10 14">
    <location>
        <begin position="47"/>
        <end position="93"/>
    </location>
</feature>
<feature type="disulfide bond" evidence="3 10 14">
    <location>
        <begin position="84"/>
        <end position="121"/>
    </location>
</feature>
<feature type="disulfide bond" evidence="3 10 14">
    <location>
        <begin position="110"/>
        <end position="150"/>
    </location>
</feature>
<feature type="disulfide bond" evidence="3 10 14">
    <location>
        <begin position="114"/>
        <end position="138"/>
    </location>
</feature>
<feature type="sequence variant" id="VAR_083242" description="Found in a patient with features of Robinow syndrome; uncertain significance; dbSNP:rs759024435." evidence="8">
    <original>P</original>
    <variation>L</variation>
    <location>
        <position position="142"/>
    </location>
</feature>
<feature type="sequence variant" id="VAR_083243" description="Found in a patient with features of Robinow syndrome; likely pathogenic." evidence="8">
    <location>
        <begin position="377"/>
        <end position="565"/>
    </location>
</feature>
<feature type="sequence variant" id="VAR_083244" description="Found in a patient with features of Robinow syndrome; likely pathogenic; dbSNP:rs1223920489." evidence="8">
    <original>G</original>
    <variation>S</variation>
    <location>
        <position position="434"/>
    </location>
</feature>
<feature type="sequence variant" id="VAR_081993" description="In OMOD2; also found in a patient with features of Robinow syndrome; dbSNP:rs1555657073." evidence="7 8 11">
    <original>G</original>
    <variation>V</variation>
    <location>
        <position position="434"/>
    </location>
</feature>
<feature type="sequence variant" id="VAR_081994" description="In OMOD2." evidence="9">
    <location>
        <begin position="547"/>
        <end position="565"/>
    </location>
</feature>
<feature type="sequence variant" id="VAR_081995" description="In OMOD2; decreased Wnt signaling." evidence="5 11">
    <location>
        <begin position="548"/>
        <end position="565"/>
    </location>
</feature>
<feature type="mutagenesis site" description="Strongly reduced interaction with C.difficile toxin TcdB." evidence="10">
    <original>Y</original>
    <variation>A</variation>
    <location>
        <position position="77"/>
    </location>
</feature>
<feature type="mutagenesis site" description="Strongly reduced interaction with C.difficile toxin TcdB." evidence="10">
    <original>K</original>
    <variation>A</variation>
    <variation>E</variation>
    <location>
        <position position="127"/>
    </location>
</feature>
<feature type="strand" evidence="15">
    <location>
        <begin position="39"/>
        <end position="41"/>
    </location>
</feature>
<feature type="helix" evidence="15">
    <location>
        <begin position="45"/>
        <end position="47"/>
    </location>
</feature>
<feature type="strand" evidence="15">
    <location>
        <begin position="48"/>
        <end position="51"/>
    </location>
</feature>
<feature type="strand" evidence="15">
    <location>
        <begin position="54"/>
        <end position="58"/>
    </location>
</feature>
<feature type="helix" evidence="15">
    <location>
        <begin position="66"/>
        <end position="73"/>
    </location>
</feature>
<feature type="helix" evidence="15">
    <location>
        <begin position="74"/>
        <end position="76"/>
    </location>
</feature>
<feature type="helix" evidence="15">
    <location>
        <begin position="77"/>
        <end position="82"/>
    </location>
</feature>
<feature type="helix" evidence="15">
    <location>
        <begin position="88"/>
        <end position="96"/>
    </location>
</feature>
<feature type="helix" evidence="15">
    <location>
        <begin position="111"/>
        <end position="127"/>
    </location>
</feature>
<feature type="helix" evidence="15">
    <location>
        <begin position="134"/>
        <end position="136"/>
    </location>
</feature>
<feature type="helix" evidence="15">
    <location>
        <begin position="138"/>
        <end position="140"/>
    </location>
</feature>
<feature type="strand" evidence="15">
    <location>
        <begin position="146"/>
        <end position="148"/>
    </location>
</feature>
<sequence length="565" mass="63554">MRPRSALPRLLLPLLLLPAAGPAQFHGEKGISIPDHGFCQPISIPLCTDIAYNQTIMPNLLGHTNQEDAGLEVHQFYPLVKVQCSPELRFFLCSMYAPVCTVLEQAIPPCRSICERARQGCEALMNKFGFQWPERLRCEHFPRHGAEQICVGQNHSEDGAPALLTTAPPPGLQPGAGGTPGGPGGGGAPPRYATLEHPFHCPRVLKVPSYLSYKFLGERDCAAPCEPARPDGSMFFSQEETRFARLWILTWSVLCCASTFFTVTTYLVDMQRFRYPERPIIFLSGCYTMVSVAYIAGFVLQERVVCNERFSEDGYRTVVQGTKKEGCTILFMMLYFFSMASSIWWVILSLTWFLAAGMKWGHEAIEANSQYFHLAAWAVPAVKTITILAMGQIDGDLLSGVCFVGLNSLDPLRGFVLAPLFVYLFIGTSFLLAGFVSLFRIRTIMKHDGTKTEKLERLMVRIGVFSVLYTVPATIVIACYFYEQAFREHWERSWVSQHCKSLAIPCPAHYTPRMSPDFTVYMIKYLMTLIVGITSGFWIWSGKTLHSWRKFYTRLTNSRHGETTV</sequence>
<organism>
    <name type="scientific">Homo sapiens</name>
    <name type="common">Human</name>
    <dbReference type="NCBI Taxonomy" id="9606"/>
    <lineage>
        <taxon>Eukaryota</taxon>
        <taxon>Metazoa</taxon>
        <taxon>Chordata</taxon>
        <taxon>Craniata</taxon>
        <taxon>Vertebrata</taxon>
        <taxon>Euteleostomi</taxon>
        <taxon>Mammalia</taxon>
        <taxon>Eutheria</taxon>
        <taxon>Euarchontoglires</taxon>
        <taxon>Primates</taxon>
        <taxon>Haplorrhini</taxon>
        <taxon>Catarrhini</taxon>
        <taxon>Hominidae</taxon>
        <taxon>Homo</taxon>
    </lineage>
</organism>
<accession>Q14332</accession>
<accession>Q0VG82</accession>
<name>FZD2_HUMAN</name>
<keyword id="KW-0002">3D-structure</keyword>
<keyword id="KW-1003">Cell membrane</keyword>
<keyword id="KW-0217">Developmental protein</keyword>
<keyword id="KW-0225">Disease variant</keyword>
<keyword id="KW-1015">Disulfide bond</keyword>
<keyword id="KW-0297">G-protein coupled receptor</keyword>
<keyword id="KW-0325">Glycoprotein</keyword>
<keyword id="KW-0472">Membrane</keyword>
<keyword id="KW-1267">Proteomics identification</keyword>
<keyword id="KW-0675">Receptor</keyword>
<keyword id="KW-1185">Reference proteome</keyword>
<keyword id="KW-0732">Signal</keyword>
<keyword id="KW-0807">Transducer</keyword>
<keyword id="KW-0812">Transmembrane</keyword>
<keyword id="KW-1133">Transmembrane helix</keyword>
<keyword id="KW-0832">Ubl conjugation</keyword>
<keyword id="KW-0879">Wnt signaling pathway</keyword>
<reference key="1">
    <citation type="journal article" date="1995" name="Genomics">
        <title>A human homologue of the Drosophila polarity gene frizzled has been identified and mapped to 17q21.1.</title>
        <authorList>
            <person name="Zhao Z."/>
            <person name="Lee C.C."/>
            <person name="Baldini A."/>
            <person name="Caskey C.T."/>
        </authorList>
    </citation>
    <scope>NUCLEOTIDE SEQUENCE [MRNA]</scope>
    <source>
        <tissue>Ovary</tissue>
    </source>
</reference>
<reference key="2">
    <citation type="journal article" date="1998" name="Biochem. Biophys. Res. Commun.">
        <title>Molecular cloning, differential expression, and chromosomal localization of human frizzled-1, frizzled-2, and frizzled-7.</title>
        <authorList>
            <person name="Sagara N."/>
            <person name="Toda G."/>
            <person name="Hirai M."/>
            <person name="Terada M."/>
            <person name="Katoh M."/>
        </authorList>
    </citation>
    <scope>NUCLEOTIDE SEQUENCE [MRNA]</scope>
    <source>
        <tissue>Fetal lung</tissue>
    </source>
</reference>
<reference key="3">
    <citation type="journal article" date="2004" name="Genome Res.">
        <title>The status, quality, and expansion of the NIH full-length cDNA project: the Mammalian Gene Collection (MGC).</title>
        <authorList>
            <consortium name="The MGC Project Team"/>
        </authorList>
    </citation>
    <scope>NUCLEOTIDE SEQUENCE [LARGE SCALE MRNA]</scope>
</reference>
<reference key="4">
    <citation type="journal article" date="1998" name="Proc. Natl. Acad. Sci. U.S.A.">
        <title>A novel frizzled gene identified in human esophageal carcinoma mediates APC/beta-catenin signals.</title>
        <authorList>
            <person name="Tanaka S."/>
            <person name="Akiyoshi T."/>
            <person name="Mori M."/>
            <person name="Wands J.R."/>
            <person name="Sugimachi K."/>
        </authorList>
    </citation>
    <scope>NUCLEOTIDE SEQUENCE [MRNA] OF 282-343</scope>
    <source>
        <tissue>Esophageal carcinoma</tissue>
    </source>
</reference>
<reference key="5">
    <citation type="journal article" date="2015" name="Hum. Mol. Genet.">
        <title>A mutation in FRIZZLED2 impairs Wnt signaling and causes autosomal dominant omodysplasia.</title>
        <authorList>
            <person name="Saal H.M."/>
            <person name="Prows C.A."/>
            <person name="Guerreiro I."/>
            <person name="Donlin M."/>
            <person name="Knudson L."/>
            <person name="Sund K.L."/>
            <person name="Chang C.F."/>
            <person name="Brugmann S.A."/>
            <person name="Stottmann R.W."/>
        </authorList>
    </citation>
    <scope>FUNCTION</scope>
    <scope>INVOLVEMENT IN OMOD2</scope>
    <scope>VARIANT OMOD2 548-TRP--VAL-565 DEL</scope>
    <scope>CHARACTERIZATION OF VARIANT OMOD2 548-TRP--VAL-565 DEL</scope>
</reference>
<reference key="6">
    <citation type="journal article" date="2016" name="Nature">
        <title>Frizzled proteins are colonic epithelial receptors for C. difficile toxin B.</title>
        <authorList>
            <person name="Tao L."/>
            <person name="Zhang J."/>
            <person name="Meraner P."/>
            <person name="Tovaglieri A."/>
            <person name="Wu X."/>
            <person name="Gerhard R."/>
            <person name="Zhang X."/>
            <person name="Stallcup W.B."/>
            <person name="Miao J."/>
            <person name="He X."/>
            <person name="Hurdle J.G."/>
            <person name="Breault D.T."/>
            <person name="Brass A.L."/>
            <person name="Dong M."/>
        </authorList>
    </citation>
    <scope>FUNCTION (MICROBIAL INFECTION)</scope>
    <scope>INTERACTION WITH C.DIFFICILE TCDB (MICROBIAL INFECTION)</scope>
</reference>
<reference key="7">
    <citation type="journal article" date="2019" name="PLoS Biol.">
        <title>Selection and characterization of ultrahigh potency designed ankyrin repeat protein inhibitors of C. difficile toxin B.</title>
        <authorList>
            <person name="Simeon R."/>
            <person name="Jiang M."/>
            <person name="Chamoun-Emanuelli A.M."/>
            <person name="Yu H."/>
            <person name="Zhang Y."/>
            <person name="Meng R."/>
            <person name="Peng Z."/>
            <person name="Jakana J."/>
            <person name="Zhang J."/>
            <person name="Feng H."/>
            <person name="Chen Z."/>
        </authorList>
    </citation>
    <scope>INTERACTION WITH C.DIFFICILE TCDB (MICROBIAL INFECTION)</scope>
</reference>
<reference evidence="14" key="8">
    <citation type="journal article" date="2018" name="Science">
        <title>Structural basis for recognition of frizzled proteins by Clostridium difficile toxin B.</title>
        <authorList>
            <person name="Chen P."/>
            <person name="Tao L."/>
            <person name="Wang T."/>
            <person name="Zhang J."/>
            <person name="He A."/>
            <person name="Lam K.H."/>
            <person name="Liu Z."/>
            <person name="He X."/>
            <person name="Perry K."/>
            <person name="Dong M."/>
            <person name="Jin R."/>
        </authorList>
    </citation>
    <scope>X-RAY CRYSTALLOGRAPHY (2.50 ANGSTROMS) OF 34-156 IN COMPLEX WITH C.DIFFICILE TCDB</scope>
    <scope>DISULFIDE BONDS</scope>
    <scope>GLYCOSYLATION AT ASN-53</scope>
    <scope>FUNCTION (MICROBIAL INFECTION)</scope>
    <scope>MUTAGENESIS OF TYR-77 AND LYS-127</scope>
</reference>
<reference key="9">
    <citation type="journal article" date="2017" name="Mol. Syndromol.">
        <title>A novel de novo FZD2 mutation in a patient with autosomal dominant omodysplasia.</title>
        <authorList>
            <person name="Tuerkmen S."/>
            <person name="Spielmann M."/>
            <person name="Guenes N."/>
            <person name="Knaus A."/>
            <person name="Floettmann R."/>
            <person name="Mundlos S."/>
            <person name="Tueysuez B."/>
        </authorList>
    </citation>
    <scope>VARIANT OMOD2 VAL-434</scope>
</reference>
<reference key="10">
    <citation type="journal article" date="2018" name="Am. J. Med. Genet. A">
        <title>Nonsense mutations in FZD2 cause autosomal-dominant omodysplasia: Robinow syndrome-like phenotypes.</title>
        <authorList>
            <person name="Nagasaki K."/>
            <person name="Nishimura G."/>
            <person name="Kikuchi T."/>
            <person name="Nyuzuki H."/>
            <person name="Sasaki S."/>
            <person name="Ogawa Y."/>
            <person name="Saitoh A."/>
        </authorList>
    </citation>
    <scope>VARIANT OMOD2 547-SER--VAL-565 DEL</scope>
</reference>
<reference key="11">
    <citation type="journal article" date="2018" name="Am. J. Hum. Genet.">
        <title>WNT signaling perturbations underlie the genetic heterogeneity of Robinow syndrome.</title>
        <authorList>
            <consortium name="Baylor-Hopkins Center for Mendelian Genomics"/>
            <person name="White J.J."/>
            <person name="Mazzeu J.F."/>
            <person name="Coban-Akdemir Z."/>
            <person name="Bayram Y."/>
            <person name="Bahrambeigi V."/>
            <person name="Hoischen A."/>
            <person name="van Bon B.W.M."/>
            <person name="Gezdirici A."/>
            <person name="Gulec E.Y."/>
            <person name="Ramond F."/>
            <person name="Touraine R."/>
            <person name="Thevenon J."/>
            <person name="Shinawi M."/>
            <person name="Beaver E."/>
            <person name="Heeley J."/>
            <person name="Hoover-Fong J."/>
            <person name="Durmaz C.D."/>
            <person name="Karabulut H.G."/>
            <person name="Marzioglu-Ozdemir E."/>
            <person name="Cayir A."/>
            <person name="Duz M.B."/>
            <person name="Seven M."/>
            <person name="Price S."/>
            <person name="Ferreira B.M."/>
            <person name="Vianna-Morgante A.M."/>
            <person name="Ellard S."/>
            <person name="Parrish A."/>
            <person name="Stals K."/>
            <person name="Flores-Daboub J."/>
            <person name="Jhangiani S.N."/>
            <person name="Gibbs R.A."/>
            <person name="Brunner H.G."/>
            <person name="Sutton V.R."/>
            <person name="Lupski J.R."/>
            <person name="Carvalho C.M.B."/>
        </authorList>
    </citation>
    <scope>INVOLVEMENT IN ROBINOW-LIKE SYNDROME</scope>
    <scope>VARIANTS LEU-142; 377-TRP--VAL-565 DEL; SER-434 AND VAL-434</scope>
</reference>
<reference key="12">
    <citation type="journal article" date="2018" name="Clin. Case Rep.">
        <title>Two unrelated patients with autosomal dominant omodysplasia and FRIZZLED2 mutations.</title>
        <authorList>
            <person name="Warren H.E."/>
            <person name="Louie R.J."/>
            <person name="Friez M.J."/>
            <person name="Frias J.L."/>
            <person name="Leroy J.G."/>
            <person name="Spranger J.W."/>
            <person name="Skinner S.A."/>
            <person name="Champaigne N.L."/>
        </authorList>
    </citation>
    <scope>VARIANTS OMOD2 VAL-434 AND 548-TRP--VAL-565 DEL</scope>
</reference>
<comment type="function">
    <text evidence="5">Receptor for Wnt proteins. Most of frizzled receptors are coupled to the beta-catenin canonical signaling pathway, which leads to the activation of disheveled proteins, inhibition of GSK-3 kinase, nuclear accumulation of beta-catenin and activation of Wnt target genes (PubMed:25759469). A second signaling pathway involving PKC and calcium fluxes has been seen for some family members, but it is not yet clear if it represents a distinct pathway or if it can be integrated in the canonical pathway, as PKC seems to be required for Wnt-mediated inactivation of GSK-3 kinase. Both pathways seem to involve interactions with G-proteins. May be involved in transduction and intercellular transmission of polarity information during tissue morphogenesis and/or in differentiated tissues.</text>
</comment>
<comment type="function">
    <text evidence="6 10">(Microbial infection) Acts as a receptor for C.difficile toxin TcdB in the colonic epithelium (PubMed:27680706, PubMed:29748286). TcdB occupies the binding site for Wnt-adducted palmitoleate in frizzled receptors and TcdB-binding prevents Wnt-binding and downstream Wnt signaling (PubMed:29748286).</text>
</comment>
<comment type="subunit">
    <text evidence="6 10 12">(Microbial infection) Interacts with C.difficile toxin TcdB; frizzled receptors constitute the major host receptors for TcdB in the colonic epithelium.</text>
</comment>
<comment type="interaction">
    <interactant intactId="EBI-6254477">
        <id>Q14332</id>
    </interactant>
    <interactant intactId="EBI-524514">
        <id>P39688</id>
        <label>Fyn</label>
    </interactant>
    <organismsDiffer>true</organismsDiffer>
    <experiments>4</experiments>
</comment>
<comment type="interaction">
    <interactant intactId="EBI-6254477">
        <id>Q14332</id>
    </interactant>
    <interactant intactId="EBI-20596828">
        <id>M4NKV9</id>
        <label>tcdB</label>
    </interactant>
    <organismsDiffer>true</organismsDiffer>
    <experiments>5</experiments>
</comment>
<comment type="subcellular location">
    <subcellularLocation>
        <location>Membrane</location>
        <topology>Multi-pass membrane protein</topology>
    </subcellularLocation>
    <subcellularLocation>
        <location evidence="1">Cell membrane</location>
        <topology evidence="1">Multi-pass membrane protein</topology>
    </subcellularLocation>
</comment>
<comment type="tissue specificity">
    <text>Widely expressed. In the adult, mainly found in heart, placenta, skeletal muscle, lung, kidney, pancreas, prostate, testis, ovary and colon. In the fetus, expressed in brain, lung and kidney. Low levels in fetal liver.</text>
</comment>
<comment type="domain">
    <text evidence="1">Lys-Thr-X-X-X-Trp motif interacts with the PDZ domain of Dvl (Disheveled) family members and is involved in the activation of the Wnt/beta-catenin signaling pathway.</text>
</comment>
<comment type="domain">
    <text evidence="1">The FZ domain is involved in binding with Wnt ligands.</text>
</comment>
<comment type="PTM">
    <text evidence="1">Ubiquitinated by ZNRF3, leading to its degradation by the proteasome.</text>
</comment>
<comment type="disease" evidence="5 7 9 11">
    <disease id="DI-05491">
        <name>Omodysplasia 2</name>
        <acronym>OMOD2</acronym>
        <description>A rare autosomal dominant skeletal dysplasia characterized by short humeri, radial head dislocation, short first metacarpals, facial dysmorphism and genitourinary anomalies.</description>
        <dbReference type="MIM" id="164745"/>
    </disease>
    <text>The disease is caused by variants affecting the gene represented in this entry.</text>
</comment>
<comment type="disease">
    <text evidence="8">Defects in FZD2 have been found in patients with Robinow syndrome-like features including short-limb dwarfism, broad thumbs and craniofacial abnormalities.</text>
</comment>
<comment type="similarity">
    <text evidence="13">Belongs to the G-protein coupled receptor Fz/Smo family.</text>
</comment>